<protein>
    <recommendedName>
        <fullName>Phosphoglycerate kinase</fullName>
        <ecNumber evidence="4">2.7.2.3</ecNumber>
    </recommendedName>
</protein>
<evidence type="ECO:0000250" key="1"/>
<evidence type="ECO:0000250" key="2">
    <source>
        <dbReference type="UniProtKB" id="A0A7G5KET3"/>
    </source>
</evidence>
<evidence type="ECO:0000250" key="3">
    <source>
        <dbReference type="UniProtKB" id="P00558"/>
    </source>
</evidence>
<evidence type="ECO:0000250" key="4">
    <source>
        <dbReference type="UniProtKB" id="P00560"/>
    </source>
</evidence>
<evidence type="ECO:0000250" key="5">
    <source>
        <dbReference type="UniProtKB" id="Q7SIB7"/>
    </source>
</evidence>
<evidence type="ECO:0000305" key="6"/>
<accession>P41756</accession>
<accession>Q2U2M7</accession>
<comment type="function">
    <text evidence="2 3 4">Catalyzes one of the two ATP producing reactions in the glycolytic pathway via the reversible conversion of 1,3-diphosphoglycerate to 3-phosphoglycerate (By similarity). Both L- and D- forms of purine and pyrimidine nucleotides can be used as substrates, but the activity is much lower on pyrimidines (By similarity). Negatively regulates the biosynthesis of acetyl-CoA from pyruvate in the mitochondrion (By similarity).</text>
</comment>
<comment type="catalytic activity">
    <reaction evidence="4">
        <text>(2R)-3-phosphoglycerate + ATP = (2R)-3-phospho-glyceroyl phosphate + ADP</text>
        <dbReference type="Rhea" id="RHEA:14801"/>
        <dbReference type="ChEBI" id="CHEBI:30616"/>
        <dbReference type="ChEBI" id="CHEBI:57604"/>
        <dbReference type="ChEBI" id="CHEBI:58272"/>
        <dbReference type="ChEBI" id="CHEBI:456216"/>
        <dbReference type="EC" id="2.7.2.3"/>
    </reaction>
</comment>
<comment type="cofactor">
    <cofactor evidence="3">
        <name>Mg(2+)</name>
        <dbReference type="ChEBI" id="CHEBI:18420"/>
    </cofactor>
</comment>
<comment type="pathway">
    <text evidence="4">Carbohydrate degradation; glycolysis; pyruvate from D-glyceraldehyde 3-phosphate: step 2/5.</text>
</comment>
<comment type="subunit">
    <text evidence="1">Monomer.</text>
</comment>
<comment type="subcellular location">
    <subcellularLocation>
        <location evidence="4">Cytoplasm</location>
    </subcellularLocation>
    <subcellularLocation>
        <location evidence="4">Mitochondrion</location>
    </subcellularLocation>
</comment>
<comment type="similarity">
    <text evidence="6">Belongs to the phosphoglycerate kinase family.</text>
</comment>
<reference key="1">
    <citation type="submission" date="1994-02" db="EMBL/GenBank/DDBJ databases">
        <title>Cloning and nucleotide sequence of the phosphoglycerate kinase gene (pgkA) from Aspergillus oryzae.</title>
        <authorList>
            <person name="Ogawa M."/>
            <person name="Kitamoto K."/>
            <person name="Gomi K."/>
            <person name="Kumagai C."/>
            <person name="Tamura G."/>
        </authorList>
    </citation>
    <scope>NUCLEOTIDE SEQUENCE [GENOMIC DNA]</scope>
</reference>
<reference key="2">
    <citation type="journal article" date="2005" name="Nature">
        <title>Genome sequencing and analysis of Aspergillus oryzae.</title>
        <authorList>
            <person name="Machida M."/>
            <person name="Asai K."/>
            <person name="Sano M."/>
            <person name="Tanaka T."/>
            <person name="Kumagai T."/>
            <person name="Terai G."/>
            <person name="Kusumoto K."/>
            <person name="Arima T."/>
            <person name="Akita O."/>
            <person name="Kashiwagi Y."/>
            <person name="Abe K."/>
            <person name="Gomi K."/>
            <person name="Horiuchi H."/>
            <person name="Kitamoto K."/>
            <person name="Kobayashi T."/>
            <person name="Takeuchi M."/>
            <person name="Denning D.W."/>
            <person name="Galagan J.E."/>
            <person name="Nierman W.C."/>
            <person name="Yu J."/>
            <person name="Archer D.B."/>
            <person name="Bennett J.W."/>
            <person name="Bhatnagar D."/>
            <person name="Cleveland T.E."/>
            <person name="Fedorova N.D."/>
            <person name="Gotoh O."/>
            <person name="Horikawa H."/>
            <person name="Hosoyama A."/>
            <person name="Ichinomiya M."/>
            <person name="Igarashi R."/>
            <person name="Iwashita K."/>
            <person name="Juvvadi P.R."/>
            <person name="Kato M."/>
            <person name="Kato Y."/>
            <person name="Kin T."/>
            <person name="Kokubun A."/>
            <person name="Maeda H."/>
            <person name="Maeyama N."/>
            <person name="Maruyama J."/>
            <person name="Nagasaki H."/>
            <person name="Nakajima T."/>
            <person name="Oda K."/>
            <person name="Okada K."/>
            <person name="Paulsen I."/>
            <person name="Sakamoto K."/>
            <person name="Sawano T."/>
            <person name="Takahashi M."/>
            <person name="Takase K."/>
            <person name="Terabayashi Y."/>
            <person name="Wortman J.R."/>
            <person name="Yamada O."/>
            <person name="Yamagata Y."/>
            <person name="Anazawa H."/>
            <person name="Hata Y."/>
            <person name="Koide Y."/>
            <person name="Komori T."/>
            <person name="Koyama Y."/>
            <person name="Minetoki T."/>
            <person name="Suharnan S."/>
            <person name="Tanaka A."/>
            <person name="Isono K."/>
            <person name="Kuhara S."/>
            <person name="Ogasawara N."/>
            <person name="Kikuchi H."/>
        </authorList>
    </citation>
    <scope>NUCLEOTIDE SEQUENCE [LARGE SCALE GENOMIC DNA]</scope>
    <source>
        <strain>ATCC 42149 / RIB 40</strain>
    </source>
</reference>
<sequence length="417" mass="44383">MSLSNKLAITDVDLKDKRVLIRVDFNVPLDADKKITNNQRIVGALPTIKYAIENGAKAVVLMSHLGRPDGKANPKYSLKPVATELEKLLSKSVIFAENCVGKETEEIVNKATGGQIILLENLRFHAEEEGSSKDAEGKKVKADKEKVEEFRKGLTALGDVYINDAFGTAHRAHSSMVGVDLPQKASGFLVKKELEYFAKALESPQRPFLAILGGAKVSDKIQLIDNLLPKVNSLIITGAMAFTFKKTLENVKIGNSLFDEAGSKIVGDIVEKAKKNNVKIVLPVDYVTADKFAADAKTGYATDADGIPDGYMGLDVGEKSVELYKKTIAEAKTILWNGPPGVFELEPFANATKKTLDAAVAAAQSGSIVIIGGGDTATVAAKYGAEAKLSHVSTGGGASLELLEGKVLPGVDALSSK</sequence>
<proteinExistence type="inferred from homology"/>
<organism>
    <name type="scientific">Aspergillus oryzae (strain ATCC 42149 / RIB 40)</name>
    <name type="common">Yellow koji mold</name>
    <dbReference type="NCBI Taxonomy" id="510516"/>
    <lineage>
        <taxon>Eukaryota</taxon>
        <taxon>Fungi</taxon>
        <taxon>Dikarya</taxon>
        <taxon>Ascomycota</taxon>
        <taxon>Pezizomycotina</taxon>
        <taxon>Eurotiomycetes</taxon>
        <taxon>Eurotiomycetidae</taxon>
        <taxon>Eurotiales</taxon>
        <taxon>Aspergillaceae</taxon>
        <taxon>Aspergillus</taxon>
        <taxon>Aspergillus subgen. Circumdati</taxon>
    </lineage>
</organism>
<keyword id="KW-0067">ATP-binding</keyword>
<keyword id="KW-0963">Cytoplasm</keyword>
<keyword id="KW-0324">Glycolysis</keyword>
<keyword id="KW-0418">Kinase</keyword>
<keyword id="KW-0460">Magnesium</keyword>
<keyword id="KW-0479">Metal-binding</keyword>
<keyword id="KW-0496">Mitochondrion</keyword>
<keyword id="KW-0547">Nucleotide-binding</keyword>
<keyword id="KW-1185">Reference proteome</keyword>
<keyword id="KW-0808">Transferase</keyword>
<dbReference type="EC" id="2.7.2.3" evidence="4"/>
<dbReference type="EMBL" id="D28484">
    <property type="protein sequence ID" value="BAA05843.1"/>
    <property type="molecule type" value="Genomic_DNA"/>
</dbReference>
<dbReference type="EMBL" id="BA000054">
    <property type="protein sequence ID" value="BAE64188.1"/>
    <property type="molecule type" value="Genomic_DNA"/>
</dbReference>
<dbReference type="RefSeq" id="XP_001825321.1">
    <property type="nucleotide sequence ID" value="XM_001825269.2"/>
</dbReference>
<dbReference type="RefSeq" id="XP_003190640.1">
    <property type="nucleotide sequence ID" value="XM_003190592.1"/>
</dbReference>
<dbReference type="SMR" id="P41756"/>
<dbReference type="STRING" id="510516.P41756"/>
<dbReference type="EnsemblFungi" id="BAE64188">
    <property type="protein sequence ID" value="BAE64188"/>
    <property type="gene ID" value="AO090038000395"/>
</dbReference>
<dbReference type="GeneID" id="5997416"/>
<dbReference type="KEGG" id="aor:AO090038000395"/>
<dbReference type="HOGENOM" id="CLU_025427_0_0_1"/>
<dbReference type="OMA" id="DMIFDIG"/>
<dbReference type="OrthoDB" id="49749at5052"/>
<dbReference type="UniPathway" id="UPA00109">
    <property type="reaction ID" value="UER00185"/>
</dbReference>
<dbReference type="Proteomes" id="UP000006564">
    <property type="component" value="Chromosome 6"/>
</dbReference>
<dbReference type="GO" id="GO:0005829">
    <property type="term" value="C:cytosol"/>
    <property type="evidence" value="ECO:0007669"/>
    <property type="project" value="TreeGrafter"/>
</dbReference>
<dbReference type="GO" id="GO:0005739">
    <property type="term" value="C:mitochondrion"/>
    <property type="evidence" value="ECO:0007669"/>
    <property type="project" value="UniProtKB-SubCell"/>
</dbReference>
<dbReference type="GO" id="GO:0043531">
    <property type="term" value="F:ADP binding"/>
    <property type="evidence" value="ECO:0007669"/>
    <property type="project" value="TreeGrafter"/>
</dbReference>
<dbReference type="GO" id="GO:0005524">
    <property type="term" value="F:ATP binding"/>
    <property type="evidence" value="ECO:0007669"/>
    <property type="project" value="UniProtKB-KW"/>
</dbReference>
<dbReference type="GO" id="GO:0046872">
    <property type="term" value="F:metal ion binding"/>
    <property type="evidence" value="ECO:0007669"/>
    <property type="project" value="UniProtKB-KW"/>
</dbReference>
<dbReference type="GO" id="GO:0004618">
    <property type="term" value="F:phosphoglycerate kinase activity"/>
    <property type="evidence" value="ECO:0007669"/>
    <property type="project" value="UniProtKB-EC"/>
</dbReference>
<dbReference type="GO" id="GO:0006094">
    <property type="term" value="P:gluconeogenesis"/>
    <property type="evidence" value="ECO:0007669"/>
    <property type="project" value="EnsemblFungi"/>
</dbReference>
<dbReference type="GO" id="GO:0006096">
    <property type="term" value="P:glycolytic process"/>
    <property type="evidence" value="ECO:0007669"/>
    <property type="project" value="UniProtKB-UniPathway"/>
</dbReference>
<dbReference type="CDD" id="cd00318">
    <property type="entry name" value="Phosphoglycerate_kinase"/>
    <property type="match status" value="1"/>
</dbReference>
<dbReference type="FunFam" id="3.40.50.1260:FF:000019">
    <property type="entry name" value="Phosphoglycerate kinase 1"/>
    <property type="match status" value="1"/>
</dbReference>
<dbReference type="FunFam" id="3.40.50.1260:FF:000031">
    <property type="entry name" value="Phosphoglycerate kinase 1"/>
    <property type="match status" value="1"/>
</dbReference>
<dbReference type="Gene3D" id="3.40.50.1260">
    <property type="entry name" value="Phosphoglycerate kinase, N-terminal domain"/>
    <property type="match status" value="3"/>
</dbReference>
<dbReference type="HAMAP" id="MF_00145">
    <property type="entry name" value="Phosphoglyc_kinase"/>
    <property type="match status" value="1"/>
</dbReference>
<dbReference type="InterPro" id="IPR001576">
    <property type="entry name" value="Phosphoglycerate_kinase"/>
</dbReference>
<dbReference type="InterPro" id="IPR015911">
    <property type="entry name" value="Phosphoglycerate_kinase_CS"/>
</dbReference>
<dbReference type="InterPro" id="IPR015824">
    <property type="entry name" value="Phosphoglycerate_kinase_N"/>
</dbReference>
<dbReference type="InterPro" id="IPR036043">
    <property type="entry name" value="Phosphoglycerate_kinase_sf"/>
</dbReference>
<dbReference type="PANTHER" id="PTHR11406">
    <property type="entry name" value="PHOSPHOGLYCERATE KINASE"/>
    <property type="match status" value="1"/>
</dbReference>
<dbReference type="PANTHER" id="PTHR11406:SF0">
    <property type="entry name" value="PHOSPHOGLYCERATE KINASE"/>
    <property type="match status" value="1"/>
</dbReference>
<dbReference type="Pfam" id="PF00162">
    <property type="entry name" value="PGK"/>
    <property type="match status" value="1"/>
</dbReference>
<dbReference type="PIRSF" id="PIRSF000724">
    <property type="entry name" value="Pgk"/>
    <property type="match status" value="1"/>
</dbReference>
<dbReference type="PRINTS" id="PR00477">
    <property type="entry name" value="PHGLYCKINASE"/>
</dbReference>
<dbReference type="SUPFAM" id="SSF53748">
    <property type="entry name" value="Phosphoglycerate kinase"/>
    <property type="match status" value="1"/>
</dbReference>
<dbReference type="PROSITE" id="PS00111">
    <property type="entry name" value="PGLYCERATE_KINASE"/>
    <property type="match status" value="1"/>
</dbReference>
<feature type="chain" id="PRO_0000145875" description="Phosphoglycerate kinase">
    <location>
        <begin position="1"/>
        <end position="417"/>
    </location>
</feature>
<feature type="binding site" evidence="3">
    <location>
        <position position="23"/>
    </location>
    <ligand>
        <name>(2R)-3-phosphoglycerate</name>
        <dbReference type="ChEBI" id="CHEBI:58272"/>
    </ligand>
</feature>
<feature type="binding site" evidence="5">
    <location>
        <position position="24"/>
    </location>
    <ligand>
        <name>(2R)-3-phosphoglycerate</name>
        <dbReference type="ChEBI" id="CHEBI:58272"/>
    </ligand>
</feature>
<feature type="binding site" evidence="3">
    <location>
        <position position="25"/>
    </location>
    <ligand>
        <name>(2R)-3-phosphoglycerate</name>
        <dbReference type="ChEBI" id="CHEBI:58272"/>
    </ligand>
</feature>
<feature type="binding site" evidence="5">
    <location>
        <position position="26"/>
    </location>
    <ligand>
        <name>(2R)-3-phosphoglycerate</name>
        <dbReference type="ChEBI" id="CHEBI:58272"/>
    </ligand>
</feature>
<feature type="binding site" evidence="3">
    <location>
        <position position="39"/>
    </location>
    <ligand>
        <name>(2R)-3-phosphoglycerate</name>
        <dbReference type="ChEBI" id="CHEBI:58272"/>
    </ligand>
</feature>
<feature type="binding site" evidence="5">
    <location>
        <position position="40"/>
    </location>
    <ligand>
        <name>(2R)-3-phosphoglycerate</name>
        <dbReference type="ChEBI" id="CHEBI:58272"/>
    </ligand>
</feature>
<feature type="binding site" evidence="3">
    <location>
        <position position="63"/>
    </location>
    <ligand>
        <name>(2R)-3-phosphoglycerate</name>
        <dbReference type="ChEBI" id="CHEBI:58272"/>
    </ligand>
</feature>
<feature type="binding site" evidence="5">
    <location>
        <position position="64"/>
    </location>
    <ligand>
        <name>(2R)-3-phosphoglycerate</name>
        <dbReference type="ChEBI" id="CHEBI:58272"/>
    </ligand>
</feature>
<feature type="binding site" evidence="3">
    <location>
        <position position="66"/>
    </location>
    <ligand>
        <name>(2R)-3-phosphoglycerate</name>
        <dbReference type="ChEBI" id="CHEBI:58272"/>
    </ligand>
</feature>
<feature type="binding site" evidence="5">
    <location>
        <position position="67"/>
    </location>
    <ligand>
        <name>(2R)-3-phosphoglycerate</name>
        <dbReference type="ChEBI" id="CHEBI:58272"/>
    </ligand>
</feature>
<feature type="binding site" evidence="3">
    <location>
        <position position="122"/>
    </location>
    <ligand>
        <name>(2R)-3-phosphoglycerate</name>
        <dbReference type="ChEBI" id="CHEBI:58272"/>
    </ligand>
</feature>
<feature type="binding site" evidence="5">
    <location>
        <position position="123"/>
    </location>
    <ligand>
        <name>(2R)-3-phosphoglycerate</name>
        <dbReference type="ChEBI" id="CHEBI:58272"/>
    </ligand>
</feature>
<feature type="binding site" evidence="3">
    <location>
        <position position="170"/>
    </location>
    <ligand>
        <name>(2R)-3-phosphoglycerate</name>
        <dbReference type="ChEBI" id="CHEBI:58272"/>
    </ligand>
</feature>
<feature type="binding site" evidence="5">
    <location>
        <position position="171"/>
    </location>
    <ligand>
        <name>(2R)-3-phosphoglycerate</name>
        <dbReference type="ChEBI" id="CHEBI:58272"/>
    </ligand>
</feature>
<feature type="binding site" evidence="3">
    <location>
        <position position="214"/>
    </location>
    <ligand>
        <name>ADP</name>
        <dbReference type="ChEBI" id="CHEBI:456216"/>
    </ligand>
</feature>
<feature type="binding site" evidence="3">
    <location>
        <position position="214"/>
    </location>
    <ligand>
        <name>CDP</name>
        <dbReference type="ChEBI" id="CHEBI:58069"/>
    </ligand>
</feature>
<feature type="binding site" evidence="5">
    <location>
        <position position="215"/>
    </location>
    <ligand>
        <name>AMP</name>
        <dbReference type="ChEBI" id="CHEBI:456215"/>
    </ligand>
</feature>
<feature type="binding site" evidence="5">
    <location>
        <position position="215"/>
    </location>
    <ligand>
        <name>ATP</name>
        <dbReference type="ChEBI" id="CHEBI:30616"/>
    </ligand>
</feature>
<feature type="binding site" evidence="3">
    <location>
        <position position="215"/>
    </location>
    <ligand>
        <name>Mg(2+)</name>
        <dbReference type="ChEBI" id="CHEBI:18420"/>
    </ligand>
</feature>
<feature type="binding site" evidence="5">
    <location>
        <position position="216"/>
    </location>
    <ligand>
        <name>AMP</name>
        <dbReference type="ChEBI" id="CHEBI:456215"/>
    </ligand>
</feature>
<feature type="binding site" evidence="3">
    <location>
        <position position="219"/>
    </location>
    <ligand>
        <name>CDP</name>
        <dbReference type="ChEBI" id="CHEBI:58069"/>
    </ligand>
</feature>
<feature type="binding site" evidence="3">
    <location>
        <position position="219"/>
    </location>
    <ligand>
        <name>Mg(2+)</name>
        <dbReference type="ChEBI" id="CHEBI:18420"/>
    </ligand>
</feature>
<feature type="binding site" evidence="5">
    <location>
        <position position="220"/>
    </location>
    <ligand>
        <name>AMP</name>
        <dbReference type="ChEBI" id="CHEBI:456215"/>
    </ligand>
</feature>
<feature type="binding site" evidence="5">
    <location>
        <position position="220"/>
    </location>
    <ligand>
        <name>ATP</name>
        <dbReference type="ChEBI" id="CHEBI:30616"/>
    </ligand>
</feature>
<feature type="binding site" evidence="3">
    <location>
        <position position="238"/>
    </location>
    <ligand>
        <name>ADP</name>
        <dbReference type="ChEBI" id="CHEBI:456216"/>
    </ligand>
</feature>
<feature type="binding site" evidence="3">
    <location>
        <position position="238"/>
    </location>
    <ligand>
        <name>CDP</name>
        <dbReference type="ChEBI" id="CHEBI:58069"/>
    </ligand>
</feature>
<feature type="binding site" evidence="5">
    <location>
        <position position="239"/>
    </location>
    <ligand>
        <name>AMP</name>
        <dbReference type="ChEBI" id="CHEBI:456215"/>
    </ligand>
</feature>
<feature type="binding site" evidence="5">
    <location>
        <position position="239"/>
    </location>
    <ligand>
        <name>ATP</name>
        <dbReference type="ChEBI" id="CHEBI:30616"/>
    </ligand>
</feature>
<feature type="binding site" evidence="5">
    <location>
        <position position="313"/>
    </location>
    <ligand>
        <name>AMP</name>
        <dbReference type="ChEBI" id="CHEBI:456215"/>
    </ligand>
</feature>
<feature type="binding site" evidence="5">
    <location>
        <position position="313"/>
    </location>
    <ligand>
        <name>ATP</name>
        <dbReference type="ChEBI" id="CHEBI:30616"/>
    </ligand>
</feature>
<feature type="binding site" evidence="3">
    <location>
        <position position="338"/>
    </location>
    <ligand>
        <name>CDP</name>
        <dbReference type="ChEBI" id="CHEBI:58069"/>
    </ligand>
</feature>
<feature type="binding site" evidence="3">
    <location>
        <position position="343"/>
    </location>
    <ligand>
        <name>ADP</name>
        <dbReference type="ChEBI" id="CHEBI:456216"/>
    </ligand>
</feature>
<feature type="binding site" evidence="3">
    <location>
        <position position="343"/>
    </location>
    <ligand>
        <name>CDP</name>
        <dbReference type="ChEBI" id="CHEBI:58069"/>
    </ligand>
</feature>
<feature type="binding site" evidence="5">
    <location>
        <position position="344"/>
    </location>
    <ligand>
        <name>AMP</name>
        <dbReference type="ChEBI" id="CHEBI:456215"/>
    </ligand>
</feature>
<feature type="binding site" evidence="5">
    <location>
        <position position="344"/>
    </location>
    <ligand>
        <name>ATP</name>
        <dbReference type="ChEBI" id="CHEBI:30616"/>
    </ligand>
</feature>
<feature type="binding site" evidence="5">
    <location>
        <position position="375"/>
    </location>
    <ligand>
        <name>ATP</name>
        <dbReference type="ChEBI" id="CHEBI:30616"/>
    </ligand>
</feature>
<feature type="binding site" evidence="5">
    <location>
        <position position="375"/>
    </location>
    <ligand>
        <name>Mg(2+)</name>
        <dbReference type="ChEBI" id="CHEBI:18420"/>
    </ligand>
</feature>
<feature type="binding site" evidence="5">
    <location>
        <position position="376"/>
    </location>
    <ligand>
        <name>ATP</name>
        <dbReference type="ChEBI" id="CHEBI:30616"/>
    </ligand>
</feature>
<name>PGK_ASPOR</name>
<gene>
    <name type="primary">pgkA</name>
    <name type="ORF">AO090038000395</name>
</gene>